<organism>
    <name type="scientific">Yersinia pestis bv. Antiqua (strain Angola)</name>
    <dbReference type="NCBI Taxonomy" id="349746"/>
    <lineage>
        <taxon>Bacteria</taxon>
        <taxon>Pseudomonadati</taxon>
        <taxon>Pseudomonadota</taxon>
        <taxon>Gammaproteobacteria</taxon>
        <taxon>Enterobacterales</taxon>
        <taxon>Yersiniaceae</taxon>
        <taxon>Yersinia</taxon>
    </lineage>
</organism>
<proteinExistence type="inferred from homology"/>
<comment type="function">
    <text evidence="1">Inhibits all the catalytic activities of DNA gyrase by preventing its interaction with DNA. Acts by binding directly to the C-terminal domain of GyrB, which probably disrupts DNA binding by the gyrase.</text>
</comment>
<comment type="cofactor">
    <cofactor evidence="1">
        <name>Zn(2+)</name>
        <dbReference type="ChEBI" id="CHEBI:29105"/>
    </cofactor>
    <text evidence="1">Binds 1 zinc ion.</text>
</comment>
<comment type="subunit">
    <text evidence="1">Interacts with GyrB.</text>
</comment>
<comment type="similarity">
    <text evidence="1">Belongs to the DNA gyrase inhibitor YacG family.</text>
</comment>
<name>YACG_YERPG</name>
<gene>
    <name evidence="1" type="primary">yacG</name>
    <name type="ordered locus">YpAngola_A1047</name>
</gene>
<keyword id="KW-0479">Metal-binding</keyword>
<keyword id="KW-0862">Zinc</keyword>
<accession>A9R1J7</accession>
<reference key="1">
    <citation type="journal article" date="2010" name="J. Bacteriol.">
        <title>Genome sequence of the deep-rooted Yersinia pestis strain Angola reveals new insights into the evolution and pangenome of the plague bacterium.</title>
        <authorList>
            <person name="Eppinger M."/>
            <person name="Worsham P.L."/>
            <person name="Nikolich M.P."/>
            <person name="Riley D.R."/>
            <person name="Sebastian Y."/>
            <person name="Mou S."/>
            <person name="Achtman M."/>
            <person name="Lindler L.E."/>
            <person name="Ravel J."/>
        </authorList>
    </citation>
    <scope>NUCLEOTIDE SEQUENCE [LARGE SCALE GENOMIC DNA]</scope>
    <source>
        <strain>Angola</strain>
    </source>
</reference>
<dbReference type="EMBL" id="CP000901">
    <property type="protein sequence ID" value="ABX88122.1"/>
    <property type="molecule type" value="Genomic_DNA"/>
</dbReference>
<dbReference type="RefSeq" id="WP_002209317.1">
    <property type="nucleotide sequence ID" value="NZ_CP009935.1"/>
</dbReference>
<dbReference type="SMR" id="A9R1J7"/>
<dbReference type="GeneID" id="57975278"/>
<dbReference type="KEGG" id="ypg:YpAngola_A1047"/>
<dbReference type="PATRIC" id="fig|349746.12.peg.1993"/>
<dbReference type="GO" id="GO:0008657">
    <property type="term" value="F:DNA topoisomerase type II (double strand cut, ATP-hydrolyzing) inhibitor activity"/>
    <property type="evidence" value="ECO:0007669"/>
    <property type="project" value="UniProtKB-UniRule"/>
</dbReference>
<dbReference type="GO" id="GO:0008270">
    <property type="term" value="F:zinc ion binding"/>
    <property type="evidence" value="ECO:0007669"/>
    <property type="project" value="UniProtKB-UniRule"/>
</dbReference>
<dbReference type="GO" id="GO:0006355">
    <property type="term" value="P:regulation of DNA-templated transcription"/>
    <property type="evidence" value="ECO:0007669"/>
    <property type="project" value="InterPro"/>
</dbReference>
<dbReference type="Gene3D" id="3.30.50.10">
    <property type="entry name" value="Erythroid Transcription Factor GATA-1, subunit A"/>
    <property type="match status" value="1"/>
</dbReference>
<dbReference type="HAMAP" id="MF_00649">
    <property type="entry name" value="DNA_gyrase_inhibitor_YacG"/>
    <property type="match status" value="1"/>
</dbReference>
<dbReference type="InterPro" id="IPR005584">
    <property type="entry name" value="DNA_gyrase_inhibitor_YacG"/>
</dbReference>
<dbReference type="InterPro" id="IPR013088">
    <property type="entry name" value="Znf_NHR/GATA"/>
</dbReference>
<dbReference type="NCBIfam" id="NF001638">
    <property type="entry name" value="PRK00418.1"/>
    <property type="match status" value="1"/>
</dbReference>
<dbReference type="PANTHER" id="PTHR36150">
    <property type="entry name" value="DNA GYRASE INHIBITOR YACG"/>
    <property type="match status" value="1"/>
</dbReference>
<dbReference type="PANTHER" id="PTHR36150:SF1">
    <property type="entry name" value="DNA GYRASE INHIBITOR YACG"/>
    <property type="match status" value="1"/>
</dbReference>
<dbReference type="Pfam" id="PF03884">
    <property type="entry name" value="YacG"/>
    <property type="match status" value="1"/>
</dbReference>
<dbReference type="SUPFAM" id="SSF57716">
    <property type="entry name" value="Glucocorticoid receptor-like (DNA-binding domain)"/>
    <property type="match status" value="1"/>
</dbReference>
<sequence length="68" mass="7900">MESEQIQVNCPTCGKVVIWGEQSPFRPFCCKRCQLIDLGEWADEEKRIPSDTELSDSDEWSEEDPLKH</sequence>
<evidence type="ECO:0000255" key="1">
    <source>
        <dbReference type="HAMAP-Rule" id="MF_00649"/>
    </source>
</evidence>
<evidence type="ECO:0000256" key="2">
    <source>
        <dbReference type="SAM" id="MobiDB-lite"/>
    </source>
</evidence>
<feature type="chain" id="PRO_1000130984" description="DNA gyrase inhibitor YacG">
    <location>
        <begin position="1"/>
        <end position="68"/>
    </location>
</feature>
<feature type="region of interest" description="Disordered" evidence="2">
    <location>
        <begin position="45"/>
        <end position="68"/>
    </location>
</feature>
<feature type="compositionally biased region" description="Acidic residues" evidence="2">
    <location>
        <begin position="53"/>
        <end position="68"/>
    </location>
</feature>
<feature type="binding site" evidence="1">
    <location>
        <position position="10"/>
    </location>
    <ligand>
        <name>Zn(2+)</name>
        <dbReference type="ChEBI" id="CHEBI:29105"/>
    </ligand>
</feature>
<feature type="binding site" evidence="1">
    <location>
        <position position="13"/>
    </location>
    <ligand>
        <name>Zn(2+)</name>
        <dbReference type="ChEBI" id="CHEBI:29105"/>
    </ligand>
</feature>
<feature type="binding site" evidence="1">
    <location>
        <position position="29"/>
    </location>
    <ligand>
        <name>Zn(2+)</name>
        <dbReference type="ChEBI" id="CHEBI:29105"/>
    </ligand>
</feature>
<feature type="binding site" evidence="1">
    <location>
        <position position="33"/>
    </location>
    <ligand>
        <name>Zn(2+)</name>
        <dbReference type="ChEBI" id="CHEBI:29105"/>
    </ligand>
</feature>
<protein>
    <recommendedName>
        <fullName evidence="1">DNA gyrase inhibitor YacG</fullName>
    </recommendedName>
</protein>